<keyword id="KW-0349">Heme</keyword>
<keyword id="KW-0408">Iron</keyword>
<keyword id="KW-0472">Membrane</keyword>
<keyword id="KW-0479">Metal-binding</keyword>
<keyword id="KW-0503">Monooxygenase</keyword>
<keyword id="KW-0560">Oxidoreductase</keyword>
<keyword id="KW-1185">Reference proteome</keyword>
<keyword id="KW-0812">Transmembrane</keyword>
<keyword id="KW-1133">Transmembrane helix</keyword>
<accession>Q1ZXN4</accession>
<accession>Q7KWU1</accession>
<protein>
    <recommendedName>
        <fullName>Probable cytochrome P450 519C1</fullName>
        <ecNumber>1.14.-.-</ecNumber>
    </recommendedName>
</protein>
<comment type="cofactor">
    <cofactor evidence="1">
        <name>heme</name>
        <dbReference type="ChEBI" id="CHEBI:30413"/>
    </cofactor>
</comment>
<comment type="subcellular location">
    <subcellularLocation>
        <location evidence="3">Membrane</location>
        <topology evidence="3">Single-pass membrane protein</topology>
    </subcellularLocation>
</comment>
<comment type="similarity">
    <text evidence="3">Belongs to the cytochrome P450 family.</text>
</comment>
<feature type="chain" id="PRO_0000318834" description="Probable cytochrome P450 519C1">
    <location>
        <begin position="1"/>
        <end position="524"/>
    </location>
</feature>
<feature type="transmembrane region" description="Helical" evidence="2">
    <location>
        <begin position="1"/>
        <end position="21"/>
    </location>
</feature>
<feature type="binding site" description="axial binding residue" evidence="1">
    <location>
        <position position="470"/>
    </location>
    <ligand>
        <name>heme</name>
        <dbReference type="ChEBI" id="CHEBI:30413"/>
    </ligand>
    <ligandPart>
        <name>Fe</name>
        <dbReference type="ChEBI" id="CHEBI:18248"/>
    </ligandPart>
</feature>
<sequence length="524" mass="60563">MNILLLIFYFLVCFLIFDFIKKNKVKKYDVPTLSYALPIIGHLYKLGVNPHRNLTKLVEKNGGIFSLWLGDIKTVIVTDPSINKEIMVKQFTNFSDRPRLKSFESFTGGGVNLIFIDYNEKWPVIRKIVSSSITKTKIISNYKEVIENQTKILINSMRTHSKINEPFKSKKYFGKFSISIVLGIMFKQDNDEKQININDNNIDNDPITKLTEPIQQVFLLLGTGNISDFIKILRPFFKNEYKKLNNSASKVFKFMEEIYDQHLLKFDKSNPRDLMDYFIEYEFTNSPNTTLEEKKISIIKGCMSFVFAGDDTVAATLEWVCLYLINNPAIQEKCYNELISVLGDNNNESKIKFISLKERDNCQYLINVIKEVLRIRTPLPLSVPRIATQNCEINGFFIEKGTQILSNAFGMSHLYVDEPNVFNPDRWINYYNQKQQQQQQQQQPQPIQNNNYFNDLDRVCLPFSTGPRNCVGISIAELNLFSVCANIILNFQIKSIDGMQLKDIEVSGISIHPIPFSIKLISRN</sequence>
<name>C519C_DICDI</name>
<proteinExistence type="inferred from homology"/>
<evidence type="ECO:0000250" key="1"/>
<evidence type="ECO:0000255" key="2"/>
<evidence type="ECO:0000305" key="3"/>
<dbReference type="EC" id="1.14.-.-"/>
<dbReference type="EMBL" id="AAFI02000008">
    <property type="protein sequence ID" value="EAS66951.1"/>
    <property type="molecule type" value="Genomic_DNA"/>
</dbReference>
<dbReference type="RefSeq" id="XP_001134617.1">
    <property type="nucleotide sequence ID" value="XM_001134617.1"/>
</dbReference>
<dbReference type="SMR" id="Q1ZXN4"/>
<dbReference type="FunCoup" id="Q1ZXN4">
    <property type="interactions" value="5"/>
</dbReference>
<dbReference type="STRING" id="44689.Q1ZXN4"/>
<dbReference type="PaxDb" id="44689-DDB0233022"/>
<dbReference type="EnsemblProtists" id="EAS66951">
    <property type="protein sequence ID" value="EAS66951"/>
    <property type="gene ID" value="DDB_G0272556"/>
</dbReference>
<dbReference type="GeneID" id="8618518"/>
<dbReference type="KEGG" id="ddi:DDB_G0272556"/>
<dbReference type="dictyBase" id="DDB_G0272556">
    <property type="gene designation" value="cyp519C1"/>
</dbReference>
<dbReference type="VEuPathDB" id="AmoebaDB:DDB_G0272556"/>
<dbReference type="eggNOG" id="KOG0156">
    <property type="taxonomic scope" value="Eukaryota"/>
</dbReference>
<dbReference type="HOGENOM" id="CLU_001570_4_0_1"/>
<dbReference type="InParanoid" id="Q1ZXN4"/>
<dbReference type="OMA" id="FTMRPHP"/>
<dbReference type="PhylomeDB" id="Q1ZXN4"/>
<dbReference type="PRO" id="PR:Q1ZXN4"/>
<dbReference type="Proteomes" id="UP000002195">
    <property type="component" value="Chromosome 2"/>
</dbReference>
<dbReference type="GO" id="GO:0016020">
    <property type="term" value="C:membrane"/>
    <property type="evidence" value="ECO:0007669"/>
    <property type="project" value="UniProtKB-SubCell"/>
</dbReference>
<dbReference type="GO" id="GO:0020037">
    <property type="term" value="F:heme binding"/>
    <property type="evidence" value="ECO:0007669"/>
    <property type="project" value="InterPro"/>
</dbReference>
<dbReference type="GO" id="GO:0005506">
    <property type="term" value="F:iron ion binding"/>
    <property type="evidence" value="ECO:0007669"/>
    <property type="project" value="InterPro"/>
</dbReference>
<dbReference type="GO" id="GO:0004497">
    <property type="term" value="F:monooxygenase activity"/>
    <property type="evidence" value="ECO:0007669"/>
    <property type="project" value="UniProtKB-KW"/>
</dbReference>
<dbReference type="GO" id="GO:0016705">
    <property type="term" value="F:oxidoreductase activity, acting on paired donors, with incorporation or reduction of molecular oxygen"/>
    <property type="evidence" value="ECO:0007669"/>
    <property type="project" value="InterPro"/>
</dbReference>
<dbReference type="CDD" id="cd20617">
    <property type="entry name" value="CYP1_2-like"/>
    <property type="match status" value="1"/>
</dbReference>
<dbReference type="Gene3D" id="1.10.630.10">
    <property type="entry name" value="Cytochrome P450"/>
    <property type="match status" value="1"/>
</dbReference>
<dbReference type="InterPro" id="IPR001128">
    <property type="entry name" value="Cyt_P450"/>
</dbReference>
<dbReference type="InterPro" id="IPR017972">
    <property type="entry name" value="Cyt_P450_CS"/>
</dbReference>
<dbReference type="InterPro" id="IPR002401">
    <property type="entry name" value="Cyt_P450_E_grp-I"/>
</dbReference>
<dbReference type="InterPro" id="IPR036396">
    <property type="entry name" value="Cyt_P450_sf"/>
</dbReference>
<dbReference type="PANTHER" id="PTHR24303:SF31">
    <property type="entry name" value="CYTOCHROME P450 307A1-RELATED"/>
    <property type="match status" value="1"/>
</dbReference>
<dbReference type="PANTHER" id="PTHR24303">
    <property type="entry name" value="HEME-BINDING MONOOXYGENASE FAMILY"/>
    <property type="match status" value="1"/>
</dbReference>
<dbReference type="Pfam" id="PF00067">
    <property type="entry name" value="p450"/>
    <property type="match status" value="1"/>
</dbReference>
<dbReference type="PRINTS" id="PR00463">
    <property type="entry name" value="EP450I"/>
</dbReference>
<dbReference type="PRINTS" id="PR00385">
    <property type="entry name" value="P450"/>
</dbReference>
<dbReference type="SUPFAM" id="SSF48264">
    <property type="entry name" value="Cytochrome P450"/>
    <property type="match status" value="1"/>
</dbReference>
<dbReference type="PROSITE" id="PS00086">
    <property type="entry name" value="CYTOCHROME_P450"/>
    <property type="match status" value="1"/>
</dbReference>
<reference key="1">
    <citation type="journal article" date="2002" name="Nature">
        <title>Sequence and analysis of chromosome 2 of Dictyostelium discoideum.</title>
        <authorList>
            <person name="Gloeckner G."/>
            <person name="Eichinger L."/>
            <person name="Szafranski K."/>
            <person name="Pachebat J.A."/>
            <person name="Bankier A.T."/>
            <person name="Dear P.H."/>
            <person name="Lehmann R."/>
            <person name="Baumgart C."/>
            <person name="Parra G."/>
            <person name="Abril J.F."/>
            <person name="Guigo R."/>
            <person name="Kumpf K."/>
            <person name="Tunggal B."/>
            <person name="Cox E.C."/>
            <person name="Quail M.A."/>
            <person name="Platzer M."/>
            <person name="Rosenthal A."/>
            <person name="Noegel A.A."/>
        </authorList>
    </citation>
    <scope>NUCLEOTIDE SEQUENCE [LARGE SCALE GENOMIC DNA]</scope>
    <source>
        <strain>AX4</strain>
    </source>
</reference>
<reference key="2">
    <citation type="journal article" date="2005" name="Nature">
        <title>The genome of the social amoeba Dictyostelium discoideum.</title>
        <authorList>
            <person name="Eichinger L."/>
            <person name="Pachebat J.A."/>
            <person name="Gloeckner G."/>
            <person name="Rajandream M.A."/>
            <person name="Sucgang R."/>
            <person name="Berriman M."/>
            <person name="Song J."/>
            <person name="Olsen R."/>
            <person name="Szafranski K."/>
            <person name="Xu Q."/>
            <person name="Tunggal B."/>
            <person name="Kummerfeld S."/>
            <person name="Madera M."/>
            <person name="Konfortov B.A."/>
            <person name="Rivero F."/>
            <person name="Bankier A.T."/>
            <person name="Lehmann R."/>
            <person name="Hamlin N."/>
            <person name="Davies R."/>
            <person name="Gaudet P."/>
            <person name="Fey P."/>
            <person name="Pilcher K."/>
            <person name="Chen G."/>
            <person name="Saunders D."/>
            <person name="Sodergren E.J."/>
            <person name="Davis P."/>
            <person name="Kerhornou A."/>
            <person name="Nie X."/>
            <person name="Hall N."/>
            <person name="Anjard C."/>
            <person name="Hemphill L."/>
            <person name="Bason N."/>
            <person name="Farbrother P."/>
            <person name="Desany B."/>
            <person name="Just E."/>
            <person name="Morio T."/>
            <person name="Rost R."/>
            <person name="Churcher C.M."/>
            <person name="Cooper J."/>
            <person name="Haydock S."/>
            <person name="van Driessche N."/>
            <person name="Cronin A."/>
            <person name="Goodhead I."/>
            <person name="Muzny D.M."/>
            <person name="Mourier T."/>
            <person name="Pain A."/>
            <person name="Lu M."/>
            <person name="Harper D."/>
            <person name="Lindsay R."/>
            <person name="Hauser H."/>
            <person name="James K.D."/>
            <person name="Quiles M."/>
            <person name="Madan Babu M."/>
            <person name="Saito T."/>
            <person name="Buchrieser C."/>
            <person name="Wardroper A."/>
            <person name="Felder M."/>
            <person name="Thangavelu M."/>
            <person name="Johnson D."/>
            <person name="Knights A."/>
            <person name="Loulseged H."/>
            <person name="Mungall K.L."/>
            <person name="Oliver K."/>
            <person name="Price C."/>
            <person name="Quail M.A."/>
            <person name="Urushihara H."/>
            <person name="Hernandez J."/>
            <person name="Rabbinowitsch E."/>
            <person name="Steffen D."/>
            <person name="Sanders M."/>
            <person name="Ma J."/>
            <person name="Kohara Y."/>
            <person name="Sharp S."/>
            <person name="Simmonds M.N."/>
            <person name="Spiegler S."/>
            <person name="Tivey A."/>
            <person name="Sugano S."/>
            <person name="White B."/>
            <person name="Walker D."/>
            <person name="Woodward J.R."/>
            <person name="Winckler T."/>
            <person name="Tanaka Y."/>
            <person name="Shaulsky G."/>
            <person name="Schleicher M."/>
            <person name="Weinstock G.M."/>
            <person name="Rosenthal A."/>
            <person name="Cox E.C."/>
            <person name="Chisholm R.L."/>
            <person name="Gibbs R.A."/>
            <person name="Loomis W.F."/>
            <person name="Platzer M."/>
            <person name="Kay R.R."/>
            <person name="Williams J.G."/>
            <person name="Dear P.H."/>
            <person name="Noegel A.A."/>
            <person name="Barrell B.G."/>
            <person name="Kuspa A."/>
        </authorList>
    </citation>
    <scope>NUCLEOTIDE SEQUENCE [LARGE SCALE GENOMIC DNA]</scope>
    <source>
        <strain>AX4</strain>
    </source>
</reference>
<organism>
    <name type="scientific">Dictyostelium discoideum</name>
    <name type="common">Social amoeba</name>
    <dbReference type="NCBI Taxonomy" id="44689"/>
    <lineage>
        <taxon>Eukaryota</taxon>
        <taxon>Amoebozoa</taxon>
        <taxon>Evosea</taxon>
        <taxon>Eumycetozoa</taxon>
        <taxon>Dictyostelia</taxon>
        <taxon>Dictyosteliales</taxon>
        <taxon>Dictyosteliaceae</taxon>
        <taxon>Dictyostelium</taxon>
    </lineage>
</organism>
<gene>
    <name type="primary">cyp519C1</name>
    <name type="ORF">DDB_G0272556</name>
</gene>